<comment type="function">
    <text evidence="1">Specifically inhibits the cysteine protease staphopain B (SspB) by blocking the active site of the enzyme. Probably required to protect cytoplasmic proteins from being degraded by prematurely activated/folded prostaphopain B. Also involved in growth capacity, viability and bacterial morphology (By similarity).</text>
</comment>
<comment type="subunit">
    <text evidence="1">Forms a stable non-covalent complex with prematurely activated/folded SspB.</text>
</comment>
<comment type="subcellular location">
    <subcellularLocation>
        <location evidence="1">Cytoplasm</location>
    </subcellularLocation>
</comment>
<comment type="miscellaneous">
    <text evidence="1">Inactivated by staphylococcal serine protease (SspA).</text>
</comment>
<comment type="similarity">
    <text evidence="2">Belongs to the protease inhibitor I57 (SspC) family.</text>
</comment>
<evidence type="ECO:0000250" key="1"/>
<evidence type="ECO:0000305" key="2"/>
<proteinExistence type="inferred from homology"/>
<dbReference type="EMBL" id="BX571856">
    <property type="protein sequence ID" value="CAG40024.1"/>
    <property type="molecule type" value="Genomic_DNA"/>
</dbReference>
<dbReference type="RefSeq" id="WP_000284455.1">
    <property type="nucleotide sequence ID" value="NC_002952.2"/>
</dbReference>
<dbReference type="SMR" id="Q6GI36"/>
<dbReference type="MEROPS" id="I57.001"/>
<dbReference type="KEGG" id="sar:SAR1020"/>
<dbReference type="HOGENOM" id="CLU_174854_0_0_9"/>
<dbReference type="Proteomes" id="UP000000596">
    <property type="component" value="Chromosome"/>
</dbReference>
<dbReference type="GO" id="GO:0005737">
    <property type="term" value="C:cytoplasm"/>
    <property type="evidence" value="ECO:0007669"/>
    <property type="project" value="UniProtKB-SubCell"/>
</dbReference>
<dbReference type="GO" id="GO:0004869">
    <property type="term" value="F:cysteine-type endopeptidase inhibitor activity"/>
    <property type="evidence" value="ECO:0007669"/>
    <property type="project" value="UniProtKB-KW"/>
</dbReference>
<dbReference type="Gene3D" id="2.40.310.10">
    <property type="entry name" value="beta-Barrel protease inhibitors"/>
    <property type="match status" value="1"/>
</dbReference>
<dbReference type="InterPro" id="IPR016085">
    <property type="entry name" value="Protease_inh_b-brl_dom"/>
</dbReference>
<dbReference type="InterPro" id="IPR037296">
    <property type="entry name" value="Staphostatin_A/B"/>
</dbReference>
<dbReference type="InterPro" id="IPR015113">
    <property type="entry name" value="Staphostatin_B"/>
</dbReference>
<dbReference type="Pfam" id="PF09023">
    <property type="entry name" value="Staphostatin_B"/>
    <property type="match status" value="1"/>
</dbReference>
<dbReference type="SUPFAM" id="SSF50882">
    <property type="entry name" value="beta-Barrel protease inhibitors"/>
    <property type="match status" value="1"/>
</dbReference>
<accession>Q6GI36</accession>
<name>SSPC_STAAR</name>
<gene>
    <name type="primary">sspC</name>
    <name type="ordered locus">SAR1020</name>
</gene>
<keyword id="KW-0963">Cytoplasm</keyword>
<keyword id="KW-0646">Protease inhibitor</keyword>
<keyword id="KW-0789">Thiol protease inhibitor</keyword>
<keyword id="KW-0843">Virulence</keyword>
<sequence>MYQLQFINLVYDTTKLTHLEQTNINLFIGNWSNHQLQKSICIRHGDDTSHNQYHILFIDTAHQRIKFSSFDNEEIIYILDYDDTQHILMQTSSKQGIGTSRPIVYERLV</sequence>
<reference key="1">
    <citation type="journal article" date="2004" name="Proc. Natl. Acad. Sci. U.S.A.">
        <title>Complete genomes of two clinical Staphylococcus aureus strains: evidence for the rapid evolution of virulence and drug resistance.</title>
        <authorList>
            <person name="Holden M.T.G."/>
            <person name="Feil E.J."/>
            <person name="Lindsay J.A."/>
            <person name="Peacock S.J."/>
            <person name="Day N.P.J."/>
            <person name="Enright M.C."/>
            <person name="Foster T.J."/>
            <person name="Moore C.E."/>
            <person name="Hurst L."/>
            <person name="Atkin R."/>
            <person name="Barron A."/>
            <person name="Bason N."/>
            <person name="Bentley S.D."/>
            <person name="Chillingworth C."/>
            <person name="Chillingworth T."/>
            <person name="Churcher C."/>
            <person name="Clark L."/>
            <person name="Corton C."/>
            <person name="Cronin A."/>
            <person name="Doggett J."/>
            <person name="Dowd L."/>
            <person name="Feltwell T."/>
            <person name="Hance Z."/>
            <person name="Harris B."/>
            <person name="Hauser H."/>
            <person name="Holroyd S."/>
            <person name="Jagels K."/>
            <person name="James K.D."/>
            <person name="Lennard N."/>
            <person name="Line A."/>
            <person name="Mayes R."/>
            <person name="Moule S."/>
            <person name="Mungall K."/>
            <person name="Ormond D."/>
            <person name="Quail M.A."/>
            <person name="Rabbinowitsch E."/>
            <person name="Rutherford K.M."/>
            <person name="Sanders M."/>
            <person name="Sharp S."/>
            <person name="Simmonds M."/>
            <person name="Stevens K."/>
            <person name="Whitehead S."/>
            <person name="Barrell B.G."/>
            <person name="Spratt B.G."/>
            <person name="Parkhill J."/>
        </authorList>
    </citation>
    <scope>NUCLEOTIDE SEQUENCE [LARGE SCALE GENOMIC DNA]</scope>
    <source>
        <strain>MRSA252</strain>
    </source>
</reference>
<feature type="chain" id="PRO_0000220557" description="Staphostatin B">
    <location>
        <begin position="1"/>
        <end position="109"/>
    </location>
</feature>
<feature type="region of interest" description="Binds to staphopain B" evidence="1">
    <location>
        <begin position="97"/>
        <end position="101"/>
    </location>
</feature>
<protein>
    <recommendedName>
        <fullName>Staphostatin B</fullName>
    </recommendedName>
    <alternativeName>
        <fullName>Staphylococcal cysteine protease B inhibitor</fullName>
    </alternativeName>
</protein>
<organism>
    <name type="scientific">Staphylococcus aureus (strain MRSA252)</name>
    <dbReference type="NCBI Taxonomy" id="282458"/>
    <lineage>
        <taxon>Bacteria</taxon>
        <taxon>Bacillati</taxon>
        <taxon>Bacillota</taxon>
        <taxon>Bacilli</taxon>
        <taxon>Bacillales</taxon>
        <taxon>Staphylococcaceae</taxon>
        <taxon>Staphylococcus</taxon>
    </lineage>
</organism>